<sequence>MIISASTDYRAAAQRKLPPFLFHYADGGAYAEHTLRHNVSDLASIALRQRVLKNMSDLSLETRLFDETLSMPVALAPVGLTGMYARRGEVQAARAAAAHGIPFTMSTVSVCPIEEVAPAIDRPMWFQLYVLKDRGFMRNALERAKAAGVKTLVFTVDMPVPGARYRDAHSGMSGPNAPLRRVWQAMTHPQWALDVGLLGRPHDLGNISKYRGNPTGLADYIGWLGNNFDPSISWKDLEWIREFWDGPMIIKGILDADDARDAVKFGADGIVVSNHGGRQLDGVLSSARALPAIADAVKGDIKILADSGIRSGLDVVRMIALGADTVLIGRAFLYALATHGEAGVKNLLALFEKEMRVAMVLTGAKSISEITRDSLVRELGA</sequence>
<reference key="1">
    <citation type="journal article" date="2006" name="Nat. Biotechnol.">
        <title>Complete genome sequence of the entomopathogenic and metabolically versatile soil bacterium Pseudomonas entomophila.</title>
        <authorList>
            <person name="Vodovar N."/>
            <person name="Vallenet D."/>
            <person name="Cruveiller S."/>
            <person name="Rouy Z."/>
            <person name="Barbe V."/>
            <person name="Acosta C."/>
            <person name="Cattolico L."/>
            <person name="Jubin C."/>
            <person name="Lajus A."/>
            <person name="Segurens B."/>
            <person name="Vacherie B."/>
            <person name="Wincker P."/>
            <person name="Weissenbach J."/>
            <person name="Lemaitre B."/>
            <person name="Medigue C."/>
            <person name="Boccard F."/>
        </authorList>
    </citation>
    <scope>NUCLEOTIDE SEQUENCE [LARGE SCALE GENOMIC DNA]</scope>
    <source>
        <strain>L48</strain>
    </source>
</reference>
<keyword id="KW-0997">Cell inner membrane</keyword>
<keyword id="KW-1003">Cell membrane</keyword>
<keyword id="KW-0285">Flavoprotein</keyword>
<keyword id="KW-0288">FMN</keyword>
<keyword id="KW-0472">Membrane</keyword>
<keyword id="KW-0560">Oxidoreductase</keyword>
<accession>Q1IF69</accession>
<dbReference type="EC" id="1.1.-.-" evidence="1"/>
<dbReference type="EMBL" id="CT573326">
    <property type="protein sequence ID" value="CAK13685.1"/>
    <property type="molecule type" value="Genomic_DNA"/>
</dbReference>
<dbReference type="RefSeq" id="WP_011532117.1">
    <property type="nucleotide sequence ID" value="NC_008027.1"/>
</dbReference>
<dbReference type="SMR" id="Q1IF69"/>
<dbReference type="STRING" id="384676.PSEEN0767"/>
<dbReference type="GeneID" id="32804075"/>
<dbReference type="KEGG" id="pen:PSEEN0767"/>
<dbReference type="eggNOG" id="COG1304">
    <property type="taxonomic scope" value="Bacteria"/>
</dbReference>
<dbReference type="HOGENOM" id="CLU_020639_0_0_6"/>
<dbReference type="OrthoDB" id="9770452at2"/>
<dbReference type="Proteomes" id="UP000000658">
    <property type="component" value="Chromosome"/>
</dbReference>
<dbReference type="GO" id="GO:0005886">
    <property type="term" value="C:plasma membrane"/>
    <property type="evidence" value="ECO:0007669"/>
    <property type="project" value="UniProtKB-SubCell"/>
</dbReference>
<dbReference type="GO" id="GO:0010181">
    <property type="term" value="F:FMN binding"/>
    <property type="evidence" value="ECO:0007669"/>
    <property type="project" value="InterPro"/>
</dbReference>
<dbReference type="GO" id="GO:0004459">
    <property type="term" value="F:L-lactate dehydrogenase activity"/>
    <property type="evidence" value="ECO:0007669"/>
    <property type="project" value="UniProtKB-UniRule"/>
</dbReference>
<dbReference type="GO" id="GO:0009060">
    <property type="term" value="P:aerobic respiration"/>
    <property type="evidence" value="ECO:0007669"/>
    <property type="project" value="TreeGrafter"/>
</dbReference>
<dbReference type="GO" id="GO:0006089">
    <property type="term" value="P:lactate metabolic process"/>
    <property type="evidence" value="ECO:0007669"/>
    <property type="project" value="UniProtKB-UniRule"/>
</dbReference>
<dbReference type="CDD" id="cd02809">
    <property type="entry name" value="alpha_hydroxyacid_oxid_FMN"/>
    <property type="match status" value="1"/>
</dbReference>
<dbReference type="FunFam" id="3.20.20.70:FF:000029">
    <property type="entry name" value="L-lactate dehydrogenase"/>
    <property type="match status" value="1"/>
</dbReference>
<dbReference type="Gene3D" id="3.20.20.70">
    <property type="entry name" value="Aldolase class I"/>
    <property type="match status" value="1"/>
</dbReference>
<dbReference type="HAMAP" id="MF_01559">
    <property type="entry name" value="L_lact_dehydr"/>
    <property type="match status" value="1"/>
</dbReference>
<dbReference type="InterPro" id="IPR013785">
    <property type="entry name" value="Aldolase_TIM"/>
</dbReference>
<dbReference type="InterPro" id="IPR012133">
    <property type="entry name" value="Alpha-hydoxy_acid_DH_FMN"/>
</dbReference>
<dbReference type="InterPro" id="IPR000262">
    <property type="entry name" value="FMN-dep_DH"/>
</dbReference>
<dbReference type="InterPro" id="IPR037396">
    <property type="entry name" value="FMN_HAD"/>
</dbReference>
<dbReference type="InterPro" id="IPR008259">
    <property type="entry name" value="FMN_hydac_DH_AS"/>
</dbReference>
<dbReference type="InterPro" id="IPR020920">
    <property type="entry name" value="LldD"/>
</dbReference>
<dbReference type="NCBIfam" id="NF033901">
    <property type="entry name" value="L_lactate_LldD"/>
    <property type="match status" value="1"/>
</dbReference>
<dbReference type="NCBIfam" id="NF008398">
    <property type="entry name" value="PRK11197.1"/>
    <property type="match status" value="1"/>
</dbReference>
<dbReference type="PANTHER" id="PTHR10578:SF85">
    <property type="entry name" value="L-LACTATE DEHYDROGENASE"/>
    <property type="match status" value="1"/>
</dbReference>
<dbReference type="PANTHER" id="PTHR10578">
    <property type="entry name" value="S -2-HYDROXY-ACID OXIDASE-RELATED"/>
    <property type="match status" value="1"/>
</dbReference>
<dbReference type="Pfam" id="PF01070">
    <property type="entry name" value="FMN_dh"/>
    <property type="match status" value="1"/>
</dbReference>
<dbReference type="PIRSF" id="PIRSF000138">
    <property type="entry name" value="Al-hdrx_acd_dh"/>
    <property type="match status" value="1"/>
</dbReference>
<dbReference type="SUPFAM" id="SSF51395">
    <property type="entry name" value="FMN-linked oxidoreductases"/>
    <property type="match status" value="1"/>
</dbReference>
<dbReference type="PROSITE" id="PS00557">
    <property type="entry name" value="FMN_HYDROXY_ACID_DH_1"/>
    <property type="match status" value="1"/>
</dbReference>
<dbReference type="PROSITE" id="PS51349">
    <property type="entry name" value="FMN_HYDROXY_ACID_DH_2"/>
    <property type="match status" value="1"/>
</dbReference>
<organism>
    <name type="scientific">Pseudomonas entomophila (strain L48)</name>
    <dbReference type="NCBI Taxonomy" id="384676"/>
    <lineage>
        <taxon>Bacteria</taxon>
        <taxon>Pseudomonadati</taxon>
        <taxon>Pseudomonadota</taxon>
        <taxon>Gammaproteobacteria</taxon>
        <taxon>Pseudomonadales</taxon>
        <taxon>Pseudomonadaceae</taxon>
        <taxon>Pseudomonas</taxon>
    </lineage>
</organism>
<comment type="function">
    <text evidence="1">Catalyzes the conversion of L-lactate to pyruvate. Is coupled to the respiratory chain.</text>
</comment>
<comment type="catalytic activity">
    <reaction evidence="1">
        <text>(S)-lactate + A = pyruvate + AH2</text>
        <dbReference type="Rhea" id="RHEA:45816"/>
        <dbReference type="ChEBI" id="CHEBI:13193"/>
        <dbReference type="ChEBI" id="CHEBI:15361"/>
        <dbReference type="ChEBI" id="CHEBI:16651"/>
        <dbReference type="ChEBI" id="CHEBI:17499"/>
    </reaction>
</comment>
<comment type="cofactor">
    <cofactor evidence="1">
        <name>FMN</name>
        <dbReference type="ChEBI" id="CHEBI:58210"/>
    </cofactor>
</comment>
<comment type="subunit">
    <text evidence="1">Homotetramer.</text>
</comment>
<comment type="subcellular location">
    <subcellularLocation>
        <location evidence="1">Cell inner membrane</location>
        <topology evidence="1">Peripheral membrane protein</topology>
    </subcellularLocation>
</comment>
<comment type="similarity">
    <text evidence="1">Belongs to the FMN-dependent alpha-hydroxy acid dehydrogenase family.</text>
</comment>
<name>LLDD_PSEE4</name>
<feature type="chain" id="PRO_1000068990" description="L-lactate dehydrogenase">
    <location>
        <begin position="1"/>
        <end position="381"/>
    </location>
</feature>
<feature type="domain" description="FMN hydroxy acid dehydrogenase" evidence="1">
    <location>
        <begin position="1"/>
        <end position="380"/>
    </location>
</feature>
<feature type="active site" description="Proton acceptor" evidence="1">
    <location>
        <position position="275"/>
    </location>
</feature>
<feature type="binding site" evidence="1">
    <location>
        <position position="24"/>
    </location>
    <ligand>
        <name>substrate</name>
    </ligand>
</feature>
<feature type="binding site" evidence="1">
    <location>
        <position position="106"/>
    </location>
    <ligand>
        <name>FMN</name>
        <dbReference type="ChEBI" id="CHEBI:58210"/>
    </ligand>
</feature>
<feature type="binding site" evidence="1">
    <location>
        <position position="127"/>
    </location>
    <ligand>
        <name>FMN</name>
        <dbReference type="ChEBI" id="CHEBI:58210"/>
    </ligand>
</feature>
<feature type="binding site" evidence="1">
    <location>
        <position position="129"/>
    </location>
    <ligand>
        <name>substrate</name>
    </ligand>
</feature>
<feature type="binding site" evidence="1">
    <location>
        <position position="155"/>
    </location>
    <ligand>
        <name>FMN</name>
        <dbReference type="ChEBI" id="CHEBI:58210"/>
    </ligand>
</feature>
<feature type="binding site" evidence="1">
    <location>
        <position position="164"/>
    </location>
    <ligand>
        <name>substrate</name>
    </ligand>
</feature>
<feature type="binding site" evidence="1">
    <location>
        <position position="251"/>
    </location>
    <ligand>
        <name>FMN</name>
        <dbReference type="ChEBI" id="CHEBI:58210"/>
    </ligand>
</feature>
<feature type="binding site" evidence="1">
    <location>
        <position position="278"/>
    </location>
    <ligand>
        <name>substrate</name>
    </ligand>
</feature>
<feature type="binding site" evidence="1">
    <location>
        <begin position="306"/>
        <end position="330"/>
    </location>
    <ligand>
        <name>FMN</name>
        <dbReference type="ChEBI" id="CHEBI:58210"/>
    </ligand>
</feature>
<gene>
    <name evidence="1" type="primary">lldD</name>
    <name type="ordered locus">PSEEN0767</name>
</gene>
<protein>
    <recommendedName>
        <fullName evidence="1">L-lactate dehydrogenase</fullName>
        <ecNumber evidence="1">1.1.-.-</ecNumber>
    </recommendedName>
</protein>
<evidence type="ECO:0000255" key="1">
    <source>
        <dbReference type="HAMAP-Rule" id="MF_01559"/>
    </source>
</evidence>
<proteinExistence type="inferred from homology"/>